<reference key="1">
    <citation type="journal article" date="2004" name="Front. Biosci.">
        <title>Molecular analysis of 'de novo' purine biosynthesis in solanaceous species and in Arabidopsis thaliana.</title>
        <authorList>
            <person name="van der Graaff E."/>
            <person name="Hooykaas P."/>
            <person name="Lein W."/>
            <person name="Lerchl J."/>
            <person name="Kunze G."/>
            <person name="Sonnewald U."/>
            <person name="Boldt R."/>
        </authorList>
    </citation>
    <scope>NUCLEOTIDE SEQUENCE [MRNA]</scope>
</reference>
<comment type="function">
    <text evidence="1">Plays an important role in the de novo pathway and in the salvage pathway of purine nucleotide biosynthesis. Catalyzes the first committed step in the biosynthesis of AMP from IMP (By similarity).</text>
</comment>
<comment type="catalytic activity">
    <reaction evidence="2">
        <text>IMP + L-aspartate + GTP = N(6)-(1,2-dicarboxyethyl)-AMP + GDP + phosphate + 2 H(+)</text>
        <dbReference type="Rhea" id="RHEA:15753"/>
        <dbReference type="ChEBI" id="CHEBI:15378"/>
        <dbReference type="ChEBI" id="CHEBI:29991"/>
        <dbReference type="ChEBI" id="CHEBI:37565"/>
        <dbReference type="ChEBI" id="CHEBI:43474"/>
        <dbReference type="ChEBI" id="CHEBI:57567"/>
        <dbReference type="ChEBI" id="CHEBI:58053"/>
        <dbReference type="ChEBI" id="CHEBI:58189"/>
        <dbReference type="EC" id="6.3.4.4"/>
    </reaction>
</comment>
<comment type="cofactor">
    <cofactor evidence="2">
        <name>Mg(2+)</name>
        <dbReference type="ChEBI" id="CHEBI:18420"/>
    </cofactor>
    <text evidence="2">Binds 1 Mg(2+) ion per subunit.</text>
</comment>
<comment type="pathway">
    <text evidence="2">Purine metabolism; AMP biosynthesis via de novo pathway; AMP from IMP: step 1/2.</text>
</comment>
<comment type="subunit">
    <text evidence="2">Homodimer.</text>
</comment>
<comment type="subcellular location">
    <subcellularLocation>
        <location evidence="2">Plastid</location>
        <location evidence="2">Chloroplast</location>
    </subcellularLocation>
</comment>
<comment type="similarity">
    <text evidence="2">Belongs to the adenylosuccinate synthetase family.</text>
</comment>
<feature type="transit peptide" description="Chloroplast" evidence="2">
    <location>
        <begin position="1"/>
        <end position="60"/>
    </location>
</feature>
<feature type="chain" id="PRO_0000399275" description="Adenylosuccinate synthetase, chloroplastic">
    <location>
        <begin position="61"/>
        <end position="505"/>
    </location>
</feature>
<feature type="active site" description="Proton acceptor" evidence="2">
    <location>
        <position position="93"/>
    </location>
</feature>
<feature type="active site" description="Proton donor" evidence="2">
    <location>
        <position position="121"/>
    </location>
</feature>
<feature type="binding site" evidence="2">
    <location>
        <begin position="92"/>
        <end position="98"/>
    </location>
    <ligand>
        <name>GTP</name>
        <dbReference type="ChEBI" id="CHEBI:37565"/>
    </ligand>
</feature>
<feature type="binding site" description="in other chain" evidence="2">
    <location>
        <begin position="93"/>
        <end position="96"/>
    </location>
    <ligand>
        <name>IMP</name>
        <dbReference type="ChEBI" id="CHEBI:58053"/>
        <note>ligand shared between dimeric partners</note>
    </ligand>
</feature>
<feature type="binding site" evidence="2">
    <location>
        <position position="93"/>
    </location>
    <ligand>
        <name>Mg(2+)</name>
        <dbReference type="ChEBI" id="CHEBI:18420"/>
    </ligand>
</feature>
<feature type="binding site" description="in other chain" evidence="2">
    <location>
        <begin position="118"/>
        <end position="121"/>
    </location>
    <ligand>
        <name>IMP</name>
        <dbReference type="ChEBI" id="CHEBI:58053"/>
        <note>ligand shared between dimeric partners</note>
    </ligand>
</feature>
<feature type="binding site" evidence="2">
    <location>
        <begin position="120"/>
        <end position="122"/>
    </location>
    <ligand>
        <name>GTP</name>
        <dbReference type="ChEBI" id="CHEBI:37565"/>
    </ligand>
</feature>
<feature type="binding site" evidence="2">
    <location>
        <position position="120"/>
    </location>
    <ligand>
        <name>Mg(2+)</name>
        <dbReference type="ChEBI" id="CHEBI:18420"/>
    </ligand>
</feature>
<feature type="binding site" description="in other chain" evidence="2">
    <location>
        <position position="210"/>
    </location>
    <ligand>
        <name>IMP</name>
        <dbReference type="ChEBI" id="CHEBI:58053"/>
        <note>ligand shared between dimeric partners</note>
    </ligand>
</feature>
<feature type="binding site" evidence="2">
    <location>
        <position position="224"/>
    </location>
    <ligand>
        <name>IMP</name>
        <dbReference type="ChEBI" id="CHEBI:58053"/>
        <note>ligand shared between dimeric partners</note>
    </ligand>
</feature>
<feature type="binding site" description="in other chain" evidence="2">
    <location>
        <position position="304"/>
    </location>
    <ligand>
        <name>IMP</name>
        <dbReference type="ChEBI" id="CHEBI:58053"/>
        <note>ligand shared between dimeric partners</note>
    </ligand>
</feature>
<feature type="binding site" description="in other chain" evidence="2">
    <location>
        <position position="319"/>
    </location>
    <ligand>
        <name>IMP</name>
        <dbReference type="ChEBI" id="CHEBI:58053"/>
        <note>ligand shared between dimeric partners</note>
    </ligand>
</feature>
<feature type="binding site" evidence="2">
    <location>
        <begin position="379"/>
        <end position="385"/>
    </location>
    <ligand>
        <name>substrate</name>
    </ligand>
</feature>
<feature type="binding site" description="in other chain" evidence="2">
    <location>
        <position position="383"/>
    </location>
    <ligand>
        <name>IMP</name>
        <dbReference type="ChEBI" id="CHEBI:58053"/>
        <note>ligand shared between dimeric partners</note>
    </ligand>
</feature>
<feature type="binding site" evidence="2">
    <location>
        <position position="385"/>
    </location>
    <ligand>
        <name>GTP</name>
        <dbReference type="ChEBI" id="CHEBI:37565"/>
    </ligand>
</feature>
<feature type="binding site" evidence="2">
    <location>
        <begin position="411"/>
        <end position="413"/>
    </location>
    <ligand>
        <name>GTP</name>
        <dbReference type="ChEBI" id="CHEBI:37565"/>
    </ligand>
</feature>
<feature type="binding site" evidence="2">
    <location>
        <begin position="494"/>
        <end position="496"/>
    </location>
    <ligand>
        <name>GTP</name>
        <dbReference type="ChEBI" id="CHEBI:37565"/>
    </ligand>
</feature>
<name>PURA_TOBAC</name>
<accession>Q6T7E8</accession>
<keyword id="KW-0150">Chloroplast</keyword>
<keyword id="KW-0342">GTP-binding</keyword>
<keyword id="KW-0436">Ligase</keyword>
<keyword id="KW-0460">Magnesium</keyword>
<keyword id="KW-0479">Metal-binding</keyword>
<keyword id="KW-0547">Nucleotide-binding</keyword>
<keyword id="KW-0934">Plastid</keyword>
<keyword id="KW-0658">Purine biosynthesis</keyword>
<keyword id="KW-1185">Reference proteome</keyword>
<keyword id="KW-0809">Transit peptide</keyword>
<sequence length="505" mass="55218">MTTMNISTLRLDSNPITTSTKSTTHRSGALGYNGSYSCRLLQFQKKNKAPSIIVCSTKPLASVVEHQGVNDSGLTRIESLSQVSGVLGCQWGDEGKGKLVDILAKHFDIVARCQGGANAGHTIYNSEGKKFALHLVPSGILNEETICVIGNGVVVHLPGLFKEIDNLESNGVSCQGRILVSDRAHLLFDFHQEVDGLREAELAKSFIGTTKRGIGPCYSSKVIRNGIRVSDLRHMDTFPQQLDLLLSDAASRFQGFNYGRDMLKEEVERYKKFAERLEPFITDTVHFMNDAISQKKKILVEGGQATMLDIDFGTYPFVTSSSPSAGGICTGLGIAPRVVGDLVGVVKAYTTRVGSGPFPTEIMGKGGDLLRFAGQEFGTTTGRPRRCGWLDIVALRFCCQINGFASLNLTKLDVLSDLSEIQLGVTYRHPDGSTLNSFPSDIRLLEQIKVEYEVMPGWQSDISSVRKYSDLPKAAREYVERIEELVGVPVHYIGVGPGRDALIYK</sequence>
<gene>
    <name evidence="2" type="primary">PURA</name>
</gene>
<protein>
    <recommendedName>
        <fullName evidence="2">Adenylosuccinate synthetase, chloroplastic</fullName>
        <shortName evidence="2">AMPSase</shortName>
        <shortName evidence="2">AdSS</shortName>
        <ecNumber evidence="2">6.3.4.4</ecNumber>
    </recommendedName>
    <alternativeName>
        <fullName evidence="2">IMP--aspartate ligase</fullName>
    </alternativeName>
</protein>
<organism>
    <name type="scientific">Nicotiana tabacum</name>
    <name type="common">Common tobacco</name>
    <dbReference type="NCBI Taxonomy" id="4097"/>
    <lineage>
        <taxon>Eukaryota</taxon>
        <taxon>Viridiplantae</taxon>
        <taxon>Streptophyta</taxon>
        <taxon>Embryophyta</taxon>
        <taxon>Tracheophyta</taxon>
        <taxon>Spermatophyta</taxon>
        <taxon>Magnoliopsida</taxon>
        <taxon>eudicotyledons</taxon>
        <taxon>Gunneridae</taxon>
        <taxon>Pentapetalae</taxon>
        <taxon>asterids</taxon>
        <taxon>lamiids</taxon>
        <taxon>Solanales</taxon>
        <taxon>Solanaceae</taxon>
        <taxon>Nicotianoideae</taxon>
        <taxon>Nicotianeae</taxon>
        <taxon>Nicotiana</taxon>
    </lineage>
</organism>
<proteinExistence type="evidence at transcript level"/>
<evidence type="ECO:0000250" key="1"/>
<evidence type="ECO:0000255" key="2">
    <source>
        <dbReference type="HAMAP-Rule" id="MF_03125"/>
    </source>
</evidence>
<dbReference type="EC" id="6.3.4.4" evidence="2"/>
<dbReference type="EMBL" id="AY429425">
    <property type="protein sequence ID" value="AAR06294.1"/>
    <property type="molecule type" value="mRNA"/>
</dbReference>
<dbReference type="RefSeq" id="NP_001312986.1">
    <property type="nucleotide sequence ID" value="NM_001326057.1"/>
</dbReference>
<dbReference type="SMR" id="Q6T7E8"/>
<dbReference type="STRING" id="4097.Q6T7E8"/>
<dbReference type="PaxDb" id="4097-Q6T7E8"/>
<dbReference type="GeneID" id="107819886"/>
<dbReference type="KEGG" id="nta:107819886"/>
<dbReference type="OMA" id="TKAYSSC"/>
<dbReference type="OrthoDB" id="10265645at2759"/>
<dbReference type="UniPathway" id="UPA00075">
    <property type="reaction ID" value="UER00335"/>
</dbReference>
<dbReference type="Proteomes" id="UP000084051">
    <property type="component" value="Unplaced"/>
</dbReference>
<dbReference type="GO" id="GO:0009507">
    <property type="term" value="C:chloroplast"/>
    <property type="evidence" value="ECO:0007669"/>
    <property type="project" value="UniProtKB-SubCell"/>
</dbReference>
<dbReference type="GO" id="GO:0005737">
    <property type="term" value="C:cytoplasm"/>
    <property type="evidence" value="ECO:0000318"/>
    <property type="project" value="GO_Central"/>
</dbReference>
<dbReference type="GO" id="GO:0004019">
    <property type="term" value="F:adenylosuccinate synthase activity"/>
    <property type="evidence" value="ECO:0000318"/>
    <property type="project" value="GO_Central"/>
</dbReference>
<dbReference type="GO" id="GO:0005525">
    <property type="term" value="F:GTP binding"/>
    <property type="evidence" value="ECO:0007669"/>
    <property type="project" value="UniProtKB-UniRule"/>
</dbReference>
<dbReference type="GO" id="GO:0000287">
    <property type="term" value="F:magnesium ion binding"/>
    <property type="evidence" value="ECO:0007669"/>
    <property type="project" value="UniProtKB-UniRule"/>
</dbReference>
<dbReference type="GO" id="GO:0044208">
    <property type="term" value="P:'de novo' AMP biosynthetic process"/>
    <property type="evidence" value="ECO:0000318"/>
    <property type="project" value="GO_Central"/>
</dbReference>
<dbReference type="GO" id="GO:0046040">
    <property type="term" value="P:IMP metabolic process"/>
    <property type="evidence" value="ECO:0000318"/>
    <property type="project" value="GO_Central"/>
</dbReference>
<dbReference type="CDD" id="cd03108">
    <property type="entry name" value="AdSS"/>
    <property type="match status" value="1"/>
</dbReference>
<dbReference type="FunFam" id="3.90.170.10:FF:000001">
    <property type="entry name" value="Adenylosuccinate synthetase"/>
    <property type="match status" value="1"/>
</dbReference>
<dbReference type="FunFam" id="1.10.300.10:FF:000002">
    <property type="entry name" value="Adenylosuccinate synthetase, chloroplastic"/>
    <property type="match status" value="1"/>
</dbReference>
<dbReference type="Gene3D" id="3.40.440.10">
    <property type="entry name" value="Adenylosuccinate Synthetase, subunit A, domain 1"/>
    <property type="match status" value="1"/>
</dbReference>
<dbReference type="Gene3D" id="1.10.300.10">
    <property type="entry name" value="Adenylosuccinate Synthetase, subunit A, domain 2"/>
    <property type="match status" value="1"/>
</dbReference>
<dbReference type="Gene3D" id="3.90.170.10">
    <property type="entry name" value="Adenylosuccinate Synthetase, subunit A, domain 3"/>
    <property type="match status" value="1"/>
</dbReference>
<dbReference type="HAMAP" id="MF_00011">
    <property type="entry name" value="Adenylosucc_synth"/>
    <property type="match status" value="1"/>
</dbReference>
<dbReference type="InterPro" id="IPR018220">
    <property type="entry name" value="Adenylosuccin_syn_GTP-bd"/>
</dbReference>
<dbReference type="InterPro" id="IPR033128">
    <property type="entry name" value="Adenylosuccin_syn_Lys_AS"/>
</dbReference>
<dbReference type="InterPro" id="IPR042109">
    <property type="entry name" value="Adenylosuccinate_synth_dom1"/>
</dbReference>
<dbReference type="InterPro" id="IPR042110">
    <property type="entry name" value="Adenylosuccinate_synth_dom2"/>
</dbReference>
<dbReference type="InterPro" id="IPR042111">
    <property type="entry name" value="Adenylosuccinate_synth_dom3"/>
</dbReference>
<dbReference type="InterPro" id="IPR001114">
    <property type="entry name" value="Adenylosuccinate_synthetase"/>
</dbReference>
<dbReference type="InterPro" id="IPR027417">
    <property type="entry name" value="P-loop_NTPase"/>
</dbReference>
<dbReference type="NCBIfam" id="NF002223">
    <property type="entry name" value="PRK01117.1"/>
    <property type="match status" value="1"/>
</dbReference>
<dbReference type="NCBIfam" id="TIGR00184">
    <property type="entry name" value="purA"/>
    <property type="match status" value="1"/>
</dbReference>
<dbReference type="PANTHER" id="PTHR11846">
    <property type="entry name" value="ADENYLOSUCCINATE SYNTHETASE"/>
    <property type="match status" value="1"/>
</dbReference>
<dbReference type="PANTHER" id="PTHR11846:SF0">
    <property type="entry name" value="ADENYLOSUCCINATE SYNTHETASE"/>
    <property type="match status" value="1"/>
</dbReference>
<dbReference type="Pfam" id="PF00709">
    <property type="entry name" value="Adenylsucc_synt"/>
    <property type="match status" value="1"/>
</dbReference>
<dbReference type="SMART" id="SM00788">
    <property type="entry name" value="Adenylsucc_synt"/>
    <property type="match status" value="1"/>
</dbReference>
<dbReference type="SUPFAM" id="SSF52540">
    <property type="entry name" value="P-loop containing nucleoside triphosphate hydrolases"/>
    <property type="match status" value="1"/>
</dbReference>
<dbReference type="PROSITE" id="PS01266">
    <property type="entry name" value="ADENYLOSUCCIN_SYN_1"/>
    <property type="match status" value="1"/>
</dbReference>
<dbReference type="PROSITE" id="PS00513">
    <property type="entry name" value="ADENYLOSUCCIN_SYN_2"/>
    <property type="match status" value="1"/>
</dbReference>